<comment type="subcellular location">
    <subcellularLocation>
        <location evidence="1">Nucleus</location>
    </subcellularLocation>
</comment>
<comment type="similarity">
    <text evidence="4">Belongs to the SNW family.</text>
</comment>
<accession>Q69QB5</accession>
<evidence type="ECO:0000250" key="1">
    <source>
        <dbReference type="UniProtKB" id="Q6K8D9"/>
    </source>
</evidence>
<evidence type="ECO:0000256" key="2">
    <source>
        <dbReference type="SAM" id="MobiDB-lite"/>
    </source>
</evidence>
<evidence type="ECO:0000303" key="3">
    <source>
    </source>
</evidence>
<evidence type="ECO:0000305" key="4"/>
<evidence type="ECO:0000312" key="5">
    <source>
        <dbReference type="EMBL" id="BAD36094.1"/>
    </source>
</evidence>
<evidence type="ECO:0000312" key="6">
    <source>
        <dbReference type="EMBL" id="BAS96805.1"/>
    </source>
</evidence>
<reference key="1">
    <citation type="journal article" date="2005" name="Nature">
        <title>The map-based sequence of the rice genome.</title>
        <authorList>
            <consortium name="International rice genome sequencing project (IRGSP)"/>
        </authorList>
    </citation>
    <scope>NUCLEOTIDE SEQUENCE [LARGE SCALE GENOMIC DNA]</scope>
    <source>
        <strain>cv. Nipponbare</strain>
    </source>
</reference>
<reference key="2">
    <citation type="journal article" date="2008" name="Nucleic Acids Res.">
        <title>The rice annotation project database (RAP-DB): 2008 update.</title>
        <authorList>
            <consortium name="The rice annotation project (RAP)"/>
        </authorList>
    </citation>
    <scope>GENOME REANNOTATION</scope>
    <source>
        <strain>cv. Nipponbare</strain>
    </source>
</reference>
<reference key="3">
    <citation type="journal article" date="2013" name="Rice">
        <title>Improvement of the Oryza sativa Nipponbare reference genome using next generation sequence and optical map data.</title>
        <authorList>
            <person name="Kawahara Y."/>
            <person name="de la Bastide M."/>
            <person name="Hamilton J.P."/>
            <person name="Kanamori H."/>
            <person name="McCombie W.R."/>
            <person name="Ouyang S."/>
            <person name="Schwartz D.C."/>
            <person name="Tanaka T."/>
            <person name="Wu J."/>
            <person name="Zhou S."/>
            <person name="Childs K.L."/>
            <person name="Davidson R.M."/>
            <person name="Lin H."/>
            <person name="Quesada-Ocampo L."/>
            <person name="Vaillancourt B."/>
            <person name="Sakai H."/>
            <person name="Lee S.S."/>
            <person name="Kim J."/>
            <person name="Numa H."/>
            <person name="Itoh T."/>
            <person name="Buell C.R."/>
            <person name="Matsumoto T."/>
        </authorList>
    </citation>
    <scope>GENOME REANNOTATION</scope>
    <source>
        <strain>cv. Nipponbare</strain>
    </source>
</reference>
<reference key="4">
    <citation type="journal article" date="2009" name="Proc. Natl. Acad. Sci. U.S.A.">
        <title>A homolog of human ski-interacting protein in rice positively regulates cell viability and stress tolerance.</title>
        <authorList>
            <person name="Hou X."/>
            <person name="Xie K."/>
            <person name="Yao J."/>
            <person name="Qi Z."/>
            <person name="Xiong L."/>
        </authorList>
    </citation>
    <scope>NOMENCLATURE</scope>
</reference>
<feature type="chain" id="PRO_0000442184" description="SNW/SKI-interacting protein B">
    <location>
        <begin position="1"/>
        <end position="540"/>
    </location>
</feature>
<feature type="region of interest" description="Disordered" evidence="2">
    <location>
        <begin position="1"/>
        <end position="106"/>
    </location>
</feature>
<feature type="region of interest" description="SNW" evidence="4">
    <location>
        <begin position="189"/>
        <end position="353"/>
    </location>
</feature>
<feature type="region of interest" description="Disordered" evidence="2">
    <location>
        <begin position="215"/>
        <end position="273"/>
    </location>
</feature>
<feature type="region of interest" description="Disordered" evidence="2">
    <location>
        <begin position="351"/>
        <end position="402"/>
    </location>
</feature>
<feature type="region of interest" description="Disordered" evidence="2">
    <location>
        <begin position="502"/>
        <end position="526"/>
    </location>
</feature>
<feature type="compositionally biased region" description="Basic and acidic residues" evidence="2">
    <location>
        <begin position="16"/>
        <end position="29"/>
    </location>
</feature>
<feature type="compositionally biased region" description="Basic and acidic residues" evidence="2">
    <location>
        <begin position="83"/>
        <end position="94"/>
    </location>
</feature>
<feature type="compositionally biased region" description="Pro residues" evidence="2">
    <location>
        <begin position="236"/>
        <end position="251"/>
    </location>
</feature>
<feature type="compositionally biased region" description="Basic and acidic residues" evidence="2">
    <location>
        <begin position="359"/>
        <end position="382"/>
    </location>
</feature>
<feature type="compositionally biased region" description="Low complexity" evidence="2">
    <location>
        <begin position="383"/>
        <end position="393"/>
    </location>
</feature>
<organism>
    <name type="scientific">Oryza sativa subsp. japonica</name>
    <name type="common">Rice</name>
    <dbReference type="NCBI Taxonomy" id="39947"/>
    <lineage>
        <taxon>Eukaryota</taxon>
        <taxon>Viridiplantae</taxon>
        <taxon>Streptophyta</taxon>
        <taxon>Embryophyta</taxon>
        <taxon>Tracheophyta</taxon>
        <taxon>Spermatophyta</taxon>
        <taxon>Magnoliopsida</taxon>
        <taxon>Liliopsida</taxon>
        <taxon>Poales</taxon>
        <taxon>Poaceae</taxon>
        <taxon>BOP clade</taxon>
        <taxon>Oryzoideae</taxon>
        <taxon>Oryzeae</taxon>
        <taxon>Oryzinae</taxon>
        <taxon>Oryza</taxon>
        <taxon>Oryza sativa</taxon>
    </lineage>
</organism>
<protein>
    <recommendedName>
        <fullName evidence="4">SNW/SKI-interacting protein B</fullName>
        <shortName evidence="3">OsSKIPb</shortName>
    </recommendedName>
</protein>
<proteinExistence type="inferred from homology"/>
<keyword id="KW-0539">Nucleus</keyword>
<keyword id="KW-1185">Reference proteome</keyword>
<dbReference type="EMBL" id="AP005425">
    <property type="protein sequence ID" value="BAD36094.1"/>
    <property type="molecule type" value="Genomic_DNA"/>
</dbReference>
<dbReference type="EMBL" id="AP008212">
    <property type="status" value="NOT_ANNOTATED_CDS"/>
    <property type="molecule type" value="Genomic_DNA"/>
</dbReference>
<dbReference type="EMBL" id="AP014962">
    <property type="protein sequence ID" value="BAS96805.1"/>
    <property type="molecule type" value="Genomic_DNA"/>
</dbReference>
<dbReference type="SMR" id="Q69QB5"/>
<dbReference type="FunCoup" id="Q69QB5">
    <property type="interactions" value="2081"/>
</dbReference>
<dbReference type="STRING" id="39947.Q69QB5"/>
<dbReference type="PaxDb" id="39947-Q69QB5"/>
<dbReference type="EnsemblPlants" id="Os06t0218000-01">
    <property type="protein sequence ID" value="Os06t0218000-01"/>
    <property type="gene ID" value="Os06g0218000"/>
</dbReference>
<dbReference type="Gramene" id="Os06t0218000-01">
    <property type="protein sequence ID" value="Os06t0218000-01"/>
    <property type="gene ID" value="Os06g0218000"/>
</dbReference>
<dbReference type="KEGG" id="osa:107275655"/>
<dbReference type="eggNOG" id="KOG2441">
    <property type="taxonomic scope" value="Eukaryota"/>
</dbReference>
<dbReference type="HOGENOM" id="CLU_006601_2_1_1"/>
<dbReference type="InParanoid" id="Q69QB5"/>
<dbReference type="OMA" id="VHINEMF"/>
<dbReference type="OrthoDB" id="666364at2759"/>
<dbReference type="Proteomes" id="UP000000763">
    <property type="component" value="Chromosome 6"/>
</dbReference>
<dbReference type="Proteomes" id="UP000059680">
    <property type="component" value="Chromosome 6"/>
</dbReference>
<dbReference type="GO" id="GO:0005681">
    <property type="term" value="C:spliceosomal complex"/>
    <property type="evidence" value="ECO:0007669"/>
    <property type="project" value="InterPro"/>
</dbReference>
<dbReference type="GO" id="GO:0000398">
    <property type="term" value="P:mRNA splicing, via spliceosome"/>
    <property type="evidence" value="ECO:0007669"/>
    <property type="project" value="InterPro"/>
</dbReference>
<dbReference type="InterPro" id="IPR017862">
    <property type="entry name" value="SKI-int_prot_SKIP"/>
</dbReference>
<dbReference type="InterPro" id="IPR004015">
    <property type="entry name" value="SKI-int_prot_SKIP_SNW-dom"/>
</dbReference>
<dbReference type="PANTHER" id="PTHR12096">
    <property type="entry name" value="NUCLEAR PROTEIN SKIP-RELATED"/>
    <property type="match status" value="1"/>
</dbReference>
<dbReference type="Pfam" id="PF02731">
    <property type="entry name" value="SKIP_SNW"/>
    <property type="match status" value="1"/>
</dbReference>
<sequence>MVLRLPDPSHGGGAPPHDHTEDEWFKERYGGGGGGGDAPRSSRAVNPVPPYGRRSALAPRRKEDFGDGGAFPEVHVAQYPLDMGRRGGDGDGEQRGSSGGVLSLTVDGSGGRVEFDAVVRQGENAGKTVYSSPGDVLPKINAAAADADDDEQAAVEETTARTSAALRAIVEKRLSAVQPSNTLASNHDPEFIKYTPARQTSAFNSGAAERIIRMGETQQDPLEPPKFKHKRVPAPAGSPPVPVLRSPPRPPSQKDHDDWKVPPSISSWKNPKGYSIPLDKRAALDGRGLHDVQVSDAFAALAEALYAAEQKAREAVETRAKVHTEMKMREKEKAEQHLLQLATKARAEMLGAAPPAPSERSKAAAERDAIREERRRERRLEARAAAAAASKKSAATRDRDRDVSERIALGMANTGGGGGEVTYDQRLFNQEKGMGSGFAGDDQYNVYSGRLFAAQPALSTLYKPSKHGEEDPDAYGDADEHLGKIAKTRRFVPDKAFTGAPASVAAGKRERPVEFDGPEMEEDPFHLDQFLTQMKKGKHQ</sequence>
<name>SKIPB_ORYSJ</name>
<gene>
    <name evidence="3" type="primary">SKIPB</name>
    <name evidence="6" type="ordered locus">Os06g0218000</name>
    <name evidence="4" type="ordered locus">LOC_Os06g11420</name>
    <name evidence="5" type="ORF">P0644A02.12</name>
</gene>